<evidence type="ECO:0000255" key="1">
    <source>
        <dbReference type="HAMAP-Rule" id="MF_01807"/>
    </source>
</evidence>
<evidence type="ECO:0000255" key="2">
    <source>
        <dbReference type="PROSITE-ProRule" id="PRU01246"/>
    </source>
</evidence>
<evidence type="ECO:0000255" key="3">
    <source>
        <dbReference type="PROSITE-ProRule" id="PRU01248"/>
    </source>
</evidence>
<evidence type="ECO:0000269" key="4">
    <source>
    </source>
</evidence>
<evidence type="ECO:0000269" key="5">
    <source>
    </source>
</evidence>
<sequence length="311" mass="33517">MKTLALQLQGYLDHLTIERGVAANTLSSYRRDLRRYSKHLEERGITDLAKVGEHDVSEFLVALRRGDPDSGTAALSAVSAARALIAVRGLHRFAAAEGLAELDVARAVRPPTPSRRLPKSLTIDEVLSLLEGAGGDKPSDGPLTLRNRAVLELLYSTGARISEAVGLDLDDIDTHARSVLLRGKGGKQRLVPVGRPAVHALDAYLVRGRPDLARRGRGTAAIFLNARGGRLSRQSAWQVLQDAAERAGITAGVSPHMLRHSFATHLLEGGADVRVVQELLGHASVTTTQIYTLVTVHALREVWAGAHPRAR</sequence>
<accession>P9WF33</accession>
<accession>L0T7F4</accession>
<accession>O33200</accession>
<accession>P67636</accession>
<protein>
    <recommendedName>
        <fullName evidence="1">Tyrosine recombinase XerD</fullName>
    </recommendedName>
</protein>
<comment type="function">
    <text evidence="1">Site-specific tyrosine recombinase, which acts by catalyzing the cutting and rejoining of the recombining DNA molecules. The XerC-XerD complex is essential to convert dimers of the bacterial chromosome into monomers to permit their segregation at cell division. It also contributes to the segregational stability of plasmids.</text>
</comment>
<comment type="subunit">
    <text evidence="1 5">Forms a cyclic heterotetrameric complex composed of two molecules of XerC and two molecules of XerD (By similarity). Co-immunoprecipitates with DarG in the presence and absence of darT (PubMed:32634279).</text>
</comment>
<comment type="subcellular location">
    <subcellularLocation>
        <location evidence="1">Cytoplasm</location>
    </subcellularLocation>
</comment>
<comment type="miscellaneous">
    <text evidence="4">Was identified as a high-confidence drug target.</text>
</comment>
<comment type="similarity">
    <text evidence="1">Belongs to the 'phage' integrase family. XerD subfamily.</text>
</comment>
<reference key="1">
    <citation type="journal article" date="1998" name="Nature">
        <title>Deciphering the biology of Mycobacterium tuberculosis from the complete genome sequence.</title>
        <authorList>
            <person name="Cole S.T."/>
            <person name="Brosch R."/>
            <person name="Parkhill J."/>
            <person name="Garnier T."/>
            <person name="Churcher C.M."/>
            <person name="Harris D.E."/>
            <person name="Gordon S.V."/>
            <person name="Eiglmeier K."/>
            <person name="Gas S."/>
            <person name="Barry C.E. III"/>
            <person name="Tekaia F."/>
            <person name="Badcock K."/>
            <person name="Basham D."/>
            <person name="Brown D."/>
            <person name="Chillingworth T."/>
            <person name="Connor R."/>
            <person name="Davies R.M."/>
            <person name="Devlin K."/>
            <person name="Feltwell T."/>
            <person name="Gentles S."/>
            <person name="Hamlin N."/>
            <person name="Holroyd S."/>
            <person name="Hornsby T."/>
            <person name="Jagels K."/>
            <person name="Krogh A."/>
            <person name="McLean J."/>
            <person name="Moule S."/>
            <person name="Murphy L.D."/>
            <person name="Oliver S."/>
            <person name="Osborne J."/>
            <person name="Quail M.A."/>
            <person name="Rajandream M.A."/>
            <person name="Rogers J."/>
            <person name="Rutter S."/>
            <person name="Seeger K."/>
            <person name="Skelton S."/>
            <person name="Squares S."/>
            <person name="Squares R."/>
            <person name="Sulston J.E."/>
            <person name="Taylor K."/>
            <person name="Whitehead S."/>
            <person name="Barrell B.G."/>
        </authorList>
    </citation>
    <scope>NUCLEOTIDE SEQUENCE [LARGE SCALE GENOMIC DNA]</scope>
    <source>
        <strain>ATCC 25618 / H37Rv</strain>
    </source>
</reference>
<reference key="2">
    <citation type="journal article" date="2008" name="BMC Syst. Biol.">
        <title>targetTB: a target identification pipeline for Mycobacterium tuberculosis through an interactome, reactome and genome-scale structural analysis.</title>
        <authorList>
            <person name="Raman K."/>
            <person name="Yeturu K."/>
            <person name="Chandra N."/>
        </authorList>
    </citation>
    <scope>IDENTIFICATION AS A DRUG TARGET [LARGE SCALE ANALYSIS]</scope>
</reference>
<reference key="3">
    <citation type="journal article" date="2011" name="Mol. Cell. Proteomics">
        <title>Proteogenomic analysis of Mycobacterium tuberculosis by high resolution mass spectrometry.</title>
        <authorList>
            <person name="Kelkar D.S."/>
            <person name="Kumar D."/>
            <person name="Kumar P."/>
            <person name="Balakrishnan L."/>
            <person name="Muthusamy B."/>
            <person name="Yadav A.K."/>
            <person name="Shrivastava P."/>
            <person name="Marimuthu A."/>
            <person name="Anand S."/>
            <person name="Sundaram H."/>
            <person name="Kingsbury R."/>
            <person name="Harsha H.C."/>
            <person name="Nair B."/>
            <person name="Prasad T.S."/>
            <person name="Chauhan D.S."/>
            <person name="Katoch K."/>
            <person name="Katoch V.M."/>
            <person name="Kumar P."/>
            <person name="Chaerkady R."/>
            <person name="Ramachandran S."/>
            <person name="Dash D."/>
            <person name="Pandey A."/>
        </authorList>
    </citation>
    <scope>IDENTIFICATION BY MASS SPECTROMETRY [LARGE SCALE ANALYSIS]</scope>
    <source>
        <strain>ATCC 25618 / H37Rv</strain>
    </source>
</reference>
<reference key="4">
    <citation type="journal article" date="2020" name="Mol. Microbiol.">
        <title>Depletion of the DarG antitoxin in Mycobacterium tuberculosis triggers the DNA-damage response and leads to cell death.</title>
        <authorList>
            <person name="Zaveri A."/>
            <person name="Wang R."/>
            <person name="Botella L."/>
            <person name="Sharma R."/>
            <person name="Zhu L."/>
            <person name="Wallach J.B."/>
            <person name="Song N."/>
            <person name="Jansen R.S."/>
            <person name="Rhee K.Y."/>
            <person name="Ehrt S."/>
            <person name="Schnappinger D."/>
        </authorList>
    </citation>
    <scope>SUBUNIT</scope>
    <source>
        <strain>H37Rv</strain>
    </source>
</reference>
<keyword id="KW-0131">Cell cycle</keyword>
<keyword id="KW-0132">Cell division</keyword>
<keyword id="KW-0159">Chromosome partition</keyword>
<keyword id="KW-0963">Cytoplasm</keyword>
<keyword id="KW-0229">DNA integration</keyword>
<keyword id="KW-0233">DNA recombination</keyword>
<keyword id="KW-0238">DNA-binding</keyword>
<keyword id="KW-1185">Reference proteome</keyword>
<dbReference type="EMBL" id="AL123456">
    <property type="protein sequence ID" value="CCP44466.1"/>
    <property type="molecule type" value="Genomic_DNA"/>
</dbReference>
<dbReference type="PIR" id="D70503">
    <property type="entry name" value="D70503"/>
</dbReference>
<dbReference type="RefSeq" id="NP_216217.1">
    <property type="nucleotide sequence ID" value="NC_000962.3"/>
</dbReference>
<dbReference type="RefSeq" id="WP_003408401.1">
    <property type="nucleotide sequence ID" value="NZ_NVQJ01000010.1"/>
</dbReference>
<dbReference type="SMR" id="P9WF33"/>
<dbReference type="FunCoup" id="P9WF33">
    <property type="interactions" value="19"/>
</dbReference>
<dbReference type="STRING" id="83332.Rv1701"/>
<dbReference type="PaxDb" id="83332-Rv1701"/>
<dbReference type="DNASU" id="885055"/>
<dbReference type="GeneID" id="45425670"/>
<dbReference type="GeneID" id="885055"/>
<dbReference type="KEGG" id="mtu:Rv1701"/>
<dbReference type="KEGG" id="mtv:RVBD_1701"/>
<dbReference type="TubercuList" id="Rv1701"/>
<dbReference type="eggNOG" id="COG4974">
    <property type="taxonomic scope" value="Bacteria"/>
</dbReference>
<dbReference type="InParanoid" id="P9WF33"/>
<dbReference type="OrthoDB" id="9801717at2"/>
<dbReference type="PhylomeDB" id="P9WF33"/>
<dbReference type="Proteomes" id="UP000001584">
    <property type="component" value="Chromosome"/>
</dbReference>
<dbReference type="GO" id="GO:0005737">
    <property type="term" value="C:cytoplasm"/>
    <property type="evidence" value="ECO:0007669"/>
    <property type="project" value="UniProtKB-SubCell"/>
</dbReference>
<dbReference type="GO" id="GO:0048476">
    <property type="term" value="C:Holliday junction resolvase complex"/>
    <property type="evidence" value="ECO:0000318"/>
    <property type="project" value="GO_Central"/>
</dbReference>
<dbReference type="GO" id="GO:0003677">
    <property type="term" value="F:DNA binding"/>
    <property type="evidence" value="ECO:0000318"/>
    <property type="project" value="GO_Central"/>
</dbReference>
<dbReference type="GO" id="GO:0009037">
    <property type="term" value="F:tyrosine-based site-specific recombinase activity"/>
    <property type="evidence" value="ECO:0000318"/>
    <property type="project" value="GO_Central"/>
</dbReference>
<dbReference type="GO" id="GO:0051301">
    <property type="term" value="P:cell division"/>
    <property type="evidence" value="ECO:0007669"/>
    <property type="project" value="UniProtKB-KW"/>
</dbReference>
<dbReference type="GO" id="GO:0007059">
    <property type="term" value="P:chromosome segregation"/>
    <property type="evidence" value="ECO:0000318"/>
    <property type="project" value="GO_Central"/>
</dbReference>
<dbReference type="GO" id="GO:0006310">
    <property type="term" value="P:DNA recombination"/>
    <property type="evidence" value="ECO:0000318"/>
    <property type="project" value="GO_Central"/>
</dbReference>
<dbReference type="GO" id="GO:0006313">
    <property type="term" value="P:DNA transposition"/>
    <property type="evidence" value="ECO:0007669"/>
    <property type="project" value="UniProtKB-UniRule"/>
</dbReference>
<dbReference type="GO" id="GO:0071139">
    <property type="term" value="P:resolution of DNA recombination intermediates"/>
    <property type="evidence" value="ECO:0000318"/>
    <property type="project" value="GO_Central"/>
</dbReference>
<dbReference type="CDD" id="cd00798">
    <property type="entry name" value="INT_XerDC_C"/>
    <property type="match status" value="1"/>
</dbReference>
<dbReference type="Gene3D" id="1.10.150.130">
    <property type="match status" value="1"/>
</dbReference>
<dbReference type="Gene3D" id="1.10.443.10">
    <property type="entry name" value="Intergrase catalytic core"/>
    <property type="match status" value="1"/>
</dbReference>
<dbReference type="HAMAP" id="MF_01808">
    <property type="entry name" value="Recomb_XerC_XerD"/>
    <property type="match status" value="1"/>
</dbReference>
<dbReference type="HAMAP" id="MF_01807">
    <property type="entry name" value="Recomb_XerD"/>
    <property type="match status" value="1"/>
</dbReference>
<dbReference type="InterPro" id="IPR044068">
    <property type="entry name" value="CB"/>
</dbReference>
<dbReference type="InterPro" id="IPR011010">
    <property type="entry name" value="DNA_brk_join_enz"/>
</dbReference>
<dbReference type="InterPro" id="IPR013762">
    <property type="entry name" value="Integrase-like_cat_sf"/>
</dbReference>
<dbReference type="InterPro" id="IPR002104">
    <property type="entry name" value="Integrase_catalytic"/>
</dbReference>
<dbReference type="InterPro" id="IPR010998">
    <property type="entry name" value="Integrase_recombinase_N"/>
</dbReference>
<dbReference type="InterPro" id="IPR004107">
    <property type="entry name" value="Integrase_SAM-like_N"/>
</dbReference>
<dbReference type="InterPro" id="IPR011932">
    <property type="entry name" value="Recomb_XerD"/>
</dbReference>
<dbReference type="InterPro" id="IPR023009">
    <property type="entry name" value="Tyrosine_recombinase_XerC/XerD"/>
</dbReference>
<dbReference type="InterPro" id="IPR050090">
    <property type="entry name" value="Tyrosine_recombinase_XerCD"/>
</dbReference>
<dbReference type="NCBIfam" id="NF001399">
    <property type="entry name" value="PRK00283.1"/>
    <property type="match status" value="1"/>
</dbReference>
<dbReference type="NCBIfam" id="TIGR02225">
    <property type="entry name" value="recomb_XerD"/>
    <property type="match status" value="1"/>
</dbReference>
<dbReference type="PANTHER" id="PTHR30349">
    <property type="entry name" value="PHAGE INTEGRASE-RELATED"/>
    <property type="match status" value="1"/>
</dbReference>
<dbReference type="PANTHER" id="PTHR30349:SF81">
    <property type="entry name" value="TYROSINE RECOMBINASE XERC"/>
    <property type="match status" value="1"/>
</dbReference>
<dbReference type="Pfam" id="PF02899">
    <property type="entry name" value="Phage_int_SAM_1"/>
    <property type="match status" value="1"/>
</dbReference>
<dbReference type="Pfam" id="PF00589">
    <property type="entry name" value="Phage_integrase"/>
    <property type="match status" value="1"/>
</dbReference>
<dbReference type="SUPFAM" id="SSF56349">
    <property type="entry name" value="DNA breaking-rejoining enzymes"/>
    <property type="match status" value="1"/>
</dbReference>
<dbReference type="PROSITE" id="PS51900">
    <property type="entry name" value="CB"/>
    <property type="match status" value="1"/>
</dbReference>
<dbReference type="PROSITE" id="PS51898">
    <property type="entry name" value="TYR_RECOMBINASE"/>
    <property type="match status" value="1"/>
</dbReference>
<organism>
    <name type="scientific">Mycobacterium tuberculosis (strain ATCC 25618 / H37Rv)</name>
    <dbReference type="NCBI Taxonomy" id="83332"/>
    <lineage>
        <taxon>Bacteria</taxon>
        <taxon>Bacillati</taxon>
        <taxon>Actinomycetota</taxon>
        <taxon>Actinomycetes</taxon>
        <taxon>Mycobacteriales</taxon>
        <taxon>Mycobacteriaceae</taxon>
        <taxon>Mycobacterium</taxon>
        <taxon>Mycobacterium tuberculosis complex</taxon>
    </lineage>
</organism>
<feature type="chain" id="PRO_0000095398" description="Tyrosine recombinase XerD">
    <location>
        <begin position="1"/>
        <end position="311"/>
    </location>
</feature>
<feature type="domain" description="Core-binding (CB)" evidence="3">
    <location>
        <begin position="2"/>
        <end position="95"/>
    </location>
</feature>
<feature type="domain" description="Tyr recombinase" evidence="2">
    <location>
        <begin position="116"/>
        <end position="304"/>
    </location>
</feature>
<feature type="active site" evidence="1">
    <location>
        <position position="160"/>
    </location>
</feature>
<feature type="active site" evidence="1">
    <location>
        <position position="184"/>
    </location>
</feature>
<feature type="active site" evidence="1">
    <location>
        <position position="256"/>
    </location>
</feature>
<feature type="active site" evidence="1">
    <location>
        <position position="259"/>
    </location>
</feature>
<feature type="active site" evidence="1">
    <location>
        <position position="282"/>
    </location>
</feature>
<feature type="active site" description="O-(3'-phospho-DNA)-tyrosine intermediate" evidence="1">
    <location>
        <position position="291"/>
    </location>
</feature>
<proteinExistence type="evidence at protein level"/>
<name>XERD_MYCTU</name>
<gene>
    <name evidence="1" type="primary">xerD</name>
    <name type="ordered locus">Rv1701</name>
    <name type="ORF">MTCI125.23</name>
</gene>